<comment type="function">
    <text evidence="1">Catalyzes the attachment of serine to tRNA(Ser). Is also able to aminoacylate tRNA(Sec) with serine, to form the misacylated tRNA L-seryl-tRNA(Sec), which will be further converted into selenocysteinyl-tRNA(Sec).</text>
</comment>
<comment type="catalytic activity">
    <reaction evidence="1">
        <text>tRNA(Ser) + L-serine + ATP = L-seryl-tRNA(Ser) + AMP + diphosphate + H(+)</text>
        <dbReference type="Rhea" id="RHEA:12292"/>
        <dbReference type="Rhea" id="RHEA-COMP:9669"/>
        <dbReference type="Rhea" id="RHEA-COMP:9703"/>
        <dbReference type="ChEBI" id="CHEBI:15378"/>
        <dbReference type="ChEBI" id="CHEBI:30616"/>
        <dbReference type="ChEBI" id="CHEBI:33019"/>
        <dbReference type="ChEBI" id="CHEBI:33384"/>
        <dbReference type="ChEBI" id="CHEBI:78442"/>
        <dbReference type="ChEBI" id="CHEBI:78533"/>
        <dbReference type="ChEBI" id="CHEBI:456215"/>
        <dbReference type="EC" id="6.1.1.11"/>
    </reaction>
</comment>
<comment type="catalytic activity">
    <reaction evidence="1">
        <text>tRNA(Sec) + L-serine + ATP = L-seryl-tRNA(Sec) + AMP + diphosphate + H(+)</text>
        <dbReference type="Rhea" id="RHEA:42580"/>
        <dbReference type="Rhea" id="RHEA-COMP:9742"/>
        <dbReference type="Rhea" id="RHEA-COMP:10128"/>
        <dbReference type="ChEBI" id="CHEBI:15378"/>
        <dbReference type="ChEBI" id="CHEBI:30616"/>
        <dbReference type="ChEBI" id="CHEBI:33019"/>
        <dbReference type="ChEBI" id="CHEBI:33384"/>
        <dbReference type="ChEBI" id="CHEBI:78442"/>
        <dbReference type="ChEBI" id="CHEBI:78533"/>
        <dbReference type="ChEBI" id="CHEBI:456215"/>
        <dbReference type="EC" id="6.1.1.11"/>
    </reaction>
</comment>
<comment type="pathway">
    <text evidence="1">Aminoacyl-tRNA biosynthesis; selenocysteinyl-tRNA(Sec) biosynthesis; L-seryl-tRNA(Sec) from L-serine and tRNA(Sec): step 1/1.</text>
</comment>
<comment type="subunit">
    <text evidence="1">Homodimer. The tRNA molecule binds across the dimer.</text>
</comment>
<comment type="subcellular location">
    <subcellularLocation>
        <location evidence="1">Cytoplasm</location>
    </subcellularLocation>
</comment>
<comment type="domain">
    <text evidence="1">Consists of two distinct domains, a catalytic core and a N-terminal extension that is involved in tRNA binding.</text>
</comment>
<comment type="similarity">
    <text evidence="1">Belongs to the class-II aminoacyl-tRNA synthetase family. Type-1 seryl-tRNA synthetase subfamily.</text>
</comment>
<sequence>MYDIKWIRDNSALFDQGRERRGLPKLSAELLALDDARRAAIAESQAAQERRNAASKEIGAAMKAKDNARAEALKAEMAELKAVSPALEEAERLAIAALDRALAEIPNLPLEDVPFGRDENDNPELRVVGEKPVFSFVPKEHFDIGEGLGLMDFEAAAKLSGARFVVNKGPLARLERALGQFMLDLHTGEHGYTEVNPPILARDDALFGTAQLPKLEEDMFAAHAGRVPQEAAGDLYWLIPTSEVVLTNLVRETILDEKQLPLRFTACTPCFRAEAGSAGRDTRGMIRQHQFTKTELVSITTPEEALVEHERMLTCAEEVLKRLGLAYRVVTLCTGDMGFASQKTYDIEVWLPGQGRYREISSCSVCGDFQARRMNARYRPEGGKTTRFVHTLNGSGVAVGRALVAVLENYQREDGGVNVPRALLPYMGGITTITRG</sequence>
<protein>
    <recommendedName>
        <fullName evidence="1">Serine--tRNA ligase</fullName>
        <ecNumber evidence="1">6.1.1.11</ecNumber>
    </recommendedName>
    <alternativeName>
        <fullName evidence="1">Seryl-tRNA synthetase</fullName>
        <shortName evidence="1">SerRS</shortName>
    </alternativeName>
    <alternativeName>
        <fullName evidence="1">Seryl-tRNA(Ser/Sec) synthetase</fullName>
    </alternativeName>
</protein>
<reference key="1">
    <citation type="journal article" date="2010" name="J. Bacteriol.">
        <title>Complete genome sequence of Beijerinckia indica subsp. indica.</title>
        <authorList>
            <person name="Tamas I."/>
            <person name="Dedysh S.N."/>
            <person name="Liesack W."/>
            <person name="Stott M.B."/>
            <person name="Alam M."/>
            <person name="Murrell J.C."/>
            <person name="Dunfield P.F."/>
        </authorList>
    </citation>
    <scope>NUCLEOTIDE SEQUENCE [LARGE SCALE GENOMIC DNA]</scope>
    <source>
        <strain>ATCC 9039 / DSM 1715 / NCIMB 8712</strain>
    </source>
</reference>
<proteinExistence type="inferred from homology"/>
<organism>
    <name type="scientific">Beijerinckia indica subsp. indica (strain ATCC 9039 / DSM 1715 / NCIMB 8712)</name>
    <dbReference type="NCBI Taxonomy" id="395963"/>
    <lineage>
        <taxon>Bacteria</taxon>
        <taxon>Pseudomonadati</taxon>
        <taxon>Pseudomonadota</taxon>
        <taxon>Alphaproteobacteria</taxon>
        <taxon>Hyphomicrobiales</taxon>
        <taxon>Beijerinckiaceae</taxon>
        <taxon>Beijerinckia</taxon>
    </lineage>
</organism>
<dbReference type="EC" id="6.1.1.11" evidence="1"/>
<dbReference type="EMBL" id="CP001016">
    <property type="protein sequence ID" value="ACB96274.1"/>
    <property type="molecule type" value="Genomic_DNA"/>
</dbReference>
<dbReference type="RefSeq" id="WP_012385625.1">
    <property type="nucleotide sequence ID" value="NC_010581.1"/>
</dbReference>
<dbReference type="SMR" id="B2IJG1"/>
<dbReference type="STRING" id="395963.Bind_2702"/>
<dbReference type="KEGG" id="bid:Bind_2702"/>
<dbReference type="eggNOG" id="COG0172">
    <property type="taxonomic scope" value="Bacteria"/>
</dbReference>
<dbReference type="HOGENOM" id="CLU_023797_1_1_5"/>
<dbReference type="OrthoDB" id="9804647at2"/>
<dbReference type="UniPathway" id="UPA00906">
    <property type="reaction ID" value="UER00895"/>
</dbReference>
<dbReference type="Proteomes" id="UP000001695">
    <property type="component" value="Chromosome"/>
</dbReference>
<dbReference type="GO" id="GO:0005737">
    <property type="term" value="C:cytoplasm"/>
    <property type="evidence" value="ECO:0007669"/>
    <property type="project" value="UniProtKB-SubCell"/>
</dbReference>
<dbReference type="GO" id="GO:0005524">
    <property type="term" value="F:ATP binding"/>
    <property type="evidence" value="ECO:0007669"/>
    <property type="project" value="UniProtKB-UniRule"/>
</dbReference>
<dbReference type="GO" id="GO:0004828">
    <property type="term" value="F:serine-tRNA ligase activity"/>
    <property type="evidence" value="ECO:0007669"/>
    <property type="project" value="UniProtKB-UniRule"/>
</dbReference>
<dbReference type="GO" id="GO:0016260">
    <property type="term" value="P:selenocysteine biosynthetic process"/>
    <property type="evidence" value="ECO:0007669"/>
    <property type="project" value="UniProtKB-UniRule"/>
</dbReference>
<dbReference type="GO" id="GO:0006434">
    <property type="term" value="P:seryl-tRNA aminoacylation"/>
    <property type="evidence" value="ECO:0007669"/>
    <property type="project" value="UniProtKB-UniRule"/>
</dbReference>
<dbReference type="CDD" id="cd00770">
    <property type="entry name" value="SerRS_core"/>
    <property type="match status" value="1"/>
</dbReference>
<dbReference type="Gene3D" id="3.30.930.10">
    <property type="entry name" value="Bira Bifunctional Protein, Domain 2"/>
    <property type="match status" value="1"/>
</dbReference>
<dbReference type="Gene3D" id="1.10.287.40">
    <property type="entry name" value="Serine-tRNA synthetase, tRNA binding domain"/>
    <property type="match status" value="1"/>
</dbReference>
<dbReference type="HAMAP" id="MF_00176">
    <property type="entry name" value="Ser_tRNA_synth_type1"/>
    <property type="match status" value="1"/>
</dbReference>
<dbReference type="InterPro" id="IPR002314">
    <property type="entry name" value="aa-tRNA-synt_IIb"/>
</dbReference>
<dbReference type="InterPro" id="IPR006195">
    <property type="entry name" value="aa-tRNA-synth_II"/>
</dbReference>
<dbReference type="InterPro" id="IPR045864">
    <property type="entry name" value="aa-tRNA-synth_II/BPL/LPL"/>
</dbReference>
<dbReference type="InterPro" id="IPR002317">
    <property type="entry name" value="Ser-tRNA-ligase_type_1"/>
</dbReference>
<dbReference type="InterPro" id="IPR015866">
    <property type="entry name" value="Ser-tRNA-synth_1_N"/>
</dbReference>
<dbReference type="InterPro" id="IPR042103">
    <property type="entry name" value="SerRS_1_N_sf"/>
</dbReference>
<dbReference type="InterPro" id="IPR033729">
    <property type="entry name" value="SerRS_core"/>
</dbReference>
<dbReference type="InterPro" id="IPR010978">
    <property type="entry name" value="tRNA-bd_arm"/>
</dbReference>
<dbReference type="NCBIfam" id="TIGR00414">
    <property type="entry name" value="serS"/>
    <property type="match status" value="1"/>
</dbReference>
<dbReference type="PANTHER" id="PTHR43697:SF1">
    <property type="entry name" value="SERINE--TRNA LIGASE"/>
    <property type="match status" value="1"/>
</dbReference>
<dbReference type="PANTHER" id="PTHR43697">
    <property type="entry name" value="SERYL-TRNA SYNTHETASE"/>
    <property type="match status" value="1"/>
</dbReference>
<dbReference type="Pfam" id="PF02403">
    <property type="entry name" value="Seryl_tRNA_N"/>
    <property type="match status" value="1"/>
</dbReference>
<dbReference type="Pfam" id="PF00587">
    <property type="entry name" value="tRNA-synt_2b"/>
    <property type="match status" value="1"/>
</dbReference>
<dbReference type="PIRSF" id="PIRSF001529">
    <property type="entry name" value="Ser-tRNA-synth_IIa"/>
    <property type="match status" value="1"/>
</dbReference>
<dbReference type="PRINTS" id="PR00981">
    <property type="entry name" value="TRNASYNTHSER"/>
</dbReference>
<dbReference type="SUPFAM" id="SSF55681">
    <property type="entry name" value="Class II aaRS and biotin synthetases"/>
    <property type="match status" value="1"/>
</dbReference>
<dbReference type="SUPFAM" id="SSF46589">
    <property type="entry name" value="tRNA-binding arm"/>
    <property type="match status" value="1"/>
</dbReference>
<dbReference type="PROSITE" id="PS50862">
    <property type="entry name" value="AA_TRNA_LIGASE_II"/>
    <property type="match status" value="1"/>
</dbReference>
<gene>
    <name evidence="1" type="primary">serS</name>
    <name type="ordered locus">Bind_2702</name>
</gene>
<name>SYS_BEII9</name>
<evidence type="ECO:0000255" key="1">
    <source>
        <dbReference type="HAMAP-Rule" id="MF_00176"/>
    </source>
</evidence>
<accession>B2IJG1</accession>
<feature type="chain" id="PRO_1000098032" description="Serine--tRNA ligase">
    <location>
        <begin position="1"/>
        <end position="436"/>
    </location>
</feature>
<feature type="binding site" evidence="1">
    <location>
        <begin position="241"/>
        <end position="243"/>
    </location>
    <ligand>
        <name>L-serine</name>
        <dbReference type="ChEBI" id="CHEBI:33384"/>
    </ligand>
</feature>
<feature type="binding site" evidence="1">
    <location>
        <begin position="272"/>
        <end position="274"/>
    </location>
    <ligand>
        <name>ATP</name>
        <dbReference type="ChEBI" id="CHEBI:30616"/>
    </ligand>
</feature>
<feature type="binding site" evidence="1">
    <location>
        <position position="295"/>
    </location>
    <ligand>
        <name>L-serine</name>
        <dbReference type="ChEBI" id="CHEBI:33384"/>
    </ligand>
</feature>
<feature type="binding site" evidence="1">
    <location>
        <begin position="359"/>
        <end position="362"/>
    </location>
    <ligand>
        <name>ATP</name>
        <dbReference type="ChEBI" id="CHEBI:30616"/>
    </ligand>
</feature>
<feature type="binding site" evidence="1">
    <location>
        <position position="395"/>
    </location>
    <ligand>
        <name>L-serine</name>
        <dbReference type="ChEBI" id="CHEBI:33384"/>
    </ligand>
</feature>
<keyword id="KW-0030">Aminoacyl-tRNA synthetase</keyword>
<keyword id="KW-0067">ATP-binding</keyword>
<keyword id="KW-0963">Cytoplasm</keyword>
<keyword id="KW-0436">Ligase</keyword>
<keyword id="KW-0547">Nucleotide-binding</keyword>
<keyword id="KW-0648">Protein biosynthesis</keyword>
<keyword id="KW-1185">Reference proteome</keyword>